<protein>
    <recommendedName>
        <fullName evidence="1">Bifunctional protein FolD</fullName>
    </recommendedName>
    <domain>
        <recommendedName>
            <fullName evidence="1">Methylenetetrahydrofolate dehydrogenase</fullName>
            <ecNumber evidence="1">1.5.1.5</ecNumber>
        </recommendedName>
    </domain>
    <domain>
        <recommendedName>
            <fullName evidence="1">Methenyltetrahydrofolate cyclohydrolase</fullName>
            <ecNumber evidence="1">3.5.4.9</ecNumber>
        </recommendedName>
    </domain>
</protein>
<proteinExistence type="inferred from homology"/>
<name>FOLD_SYNR3</name>
<dbReference type="EC" id="1.5.1.5" evidence="1"/>
<dbReference type="EC" id="3.5.4.9" evidence="1"/>
<dbReference type="EMBL" id="CT978603">
    <property type="protein sequence ID" value="CAK27652.1"/>
    <property type="molecule type" value="Genomic_DNA"/>
</dbReference>
<dbReference type="SMR" id="A5GRZ3"/>
<dbReference type="STRING" id="316278.SynRCC307_0749"/>
<dbReference type="KEGG" id="syr:SynRCC307_0749"/>
<dbReference type="eggNOG" id="COG0190">
    <property type="taxonomic scope" value="Bacteria"/>
</dbReference>
<dbReference type="HOGENOM" id="CLU_034045_0_0_3"/>
<dbReference type="OrthoDB" id="9803580at2"/>
<dbReference type="UniPathway" id="UPA00193"/>
<dbReference type="Proteomes" id="UP000001115">
    <property type="component" value="Chromosome"/>
</dbReference>
<dbReference type="GO" id="GO:0005829">
    <property type="term" value="C:cytosol"/>
    <property type="evidence" value="ECO:0007669"/>
    <property type="project" value="TreeGrafter"/>
</dbReference>
<dbReference type="GO" id="GO:0004477">
    <property type="term" value="F:methenyltetrahydrofolate cyclohydrolase activity"/>
    <property type="evidence" value="ECO:0007669"/>
    <property type="project" value="UniProtKB-UniRule"/>
</dbReference>
<dbReference type="GO" id="GO:0004488">
    <property type="term" value="F:methylenetetrahydrofolate dehydrogenase (NADP+) activity"/>
    <property type="evidence" value="ECO:0007669"/>
    <property type="project" value="UniProtKB-UniRule"/>
</dbReference>
<dbReference type="GO" id="GO:0000105">
    <property type="term" value="P:L-histidine biosynthetic process"/>
    <property type="evidence" value="ECO:0007669"/>
    <property type="project" value="UniProtKB-KW"/>
</dbReference>
<dbReference type="GO" id="GO:0009086">
    <property type="term" value="P:methionine biosynthetic process"/>
    <property type="evidence" value="ECO:0007669"/>
    <property type="project" value="UniProtKB-KW"/>
</dbReference>
<dbReference type="GO" id="GO:0006164">
    <property type="term" value="P:purine nucleotide biosynthetic process"/>
    <property type="evidence" value="ECO:0007669"/>
    <property type="project" value="UniProtKB-KW"/>
</dbReference>
<dbReference type="GO" id="GO:0035999">
    <property type="term" value="P:tetrahydrofolate interconversion"/>
    <property type="evidence" value="ECO:0007669"/>
    <property type="project" value="UniProtKB-UniRule"/>
</dbReference>
<dbReference type="CDD" id="cd01080">
    <property type="entry name" value="NAD_bind_m-THF_DH_Cyclohyd"/>
    <property type="match status" value="1"/>
</dbReference>
<dbReference type="FunFam" id="3.40.50.720:FF:000006">
    <property type="entry name" value="Bifunctional protein FolD"/>
    <property type="match status" value="1"/>
</dbReference>
<dbReference type="FunFam" id="3.40.50.10860:FF:000005">
    <property type="entry name" value="C-1-tetrahydrofolate synthase, cytoplasmic, putative"/>
    <property type="match status" value="1"/>
</dbReference>
<dbReference type="Gene3D" id="3.40.50.10860">
    <property type="entry name" value="Leucine Dehydrogenase, chain A, domain 1"/>
    <property type="match status" value="1"/>
</dbReference>
<dbReference type="Gene3D" id="3.40.50.720">
    <property type="entry name" value="NAD(P)-binding Rossmann-like Domain"/>
    <property type="match status" value="1"/>
</dbReference>
<dbReference type="HAMAP" id="MF_01576">
    <property type="entry name" value="THF_DHG_CYH"/>
    <property type="match status" value="1"/>
</dbReference>
<dbReference type="InterPro" id="IPR046346">
    <property type="entry name" value="Aminoacid_DH-like_N_sf"/>
</dbReference>
<dbReference type="InterPro" id="IPR036291">
    <property type="entry name" value="NAD(P)-bd_dom_sf"/>
</dbReference>
<dbReference type="InterPro" id="IPR000672">
    <property type="entry name" value="THF_DH/CycHdrlase"/>
</dbReference>
<dbReference type="InterPro" id="IPR020630">
    <property type="entry name" value="THF_DH/CycHdrlase_cat_dom"/>
</dbReference>
<dbReference type="InterPro" id="IPR020867">
    <property type="entry name" value="THF_DH/CycHdrlase_CS"/>
</dbReference>
<dbReference type="InterPro" id="IPR020631">
    <property type="entry name" value="THF_DH/CycHdrlase_NAD-bd_dom"/>
</dbReference>
<dbReference type="NCBIfam" id="NF010783">
    <property type="entry name" value="PRK14186.1"/>
    <property type="match status" value="1"/>
</dbReference>
<dbReference type="PANTHER" id="PTHR48099:SF5">
    <property type="entry name" value="C-1-TETRAHYDROFOLATE SYNTHASE, CYTOPLASMIC"/>
    <property type="match status" value="1"/>
</dbReference>
<dbReference type="PANTHER" id="PTHR48099">
    <property type="entry name" value="C-1-TETRAHYDROFOLATE SYNTHASE, CYTOPLASMIC-RELATED"/>
    <property type="match status" value="1"/>
</dbReference>
<dbReference type="Pfam" id="PF00763">
    <property type="entry name" value="THF_DHG_CYH"/>
    <property type="match status" value="1"/>
</dbReference>
<dbReference type="Pfam" id="PF02882">
    <property type="entry name" value="THF_DHG_CYH_C"/>
    <property type="match status" value="1"/>
</dbReference>
<dbReference type="PRINTS" id="PR00085">
    <property type="entry name" value="THFDHDRGNASE"/>
</dbReference>
<dbReference type="SUPFAM" id="SSF53223">
    <property type="entry name" value="Aminoacid dehydrogenase-like, N-terminal domain"/>
    <property type="match status" value="1"/>
</dbReference>
<dbReference type="SUPFAM" id="SSF51735">
    <property type="entry name" value="NAD(P)-binding Rossmann-fold domains"/>
    <property type="match status" value="1"/>
</dbReference>
<dbReference type="PROSITE" id="PS00767">
    <property type="entry name" value="THF_DHG_CYH_2"/>
    <property type="match status" value="1"/>
</dbReference>
<organism>
    <name type="scientific">Synechococcus sp. (strain RCC307)</name>
    <dbReference type="NCBI Taxonomy" id="316278"/>
    <lineage>
        <taxon>Bacteria</taxon>
        <taxon>Bacillati</taxon>
        <taxon>Cyanobacteriota</taxon>
        <taxon>Cyanophyceae</taxon>
        <taxon>Synechococcales</taxon>
        <taxon>Synechococcaceae</taxon>
        <taxon>Synechococcus</taxon>
    </lineage>
</organism>
<sequence>MPAQRLDGRQLAAQLEEVMAAAIASGLPRAGRPPGLAVLRVGDDPASGVYVANKEKACARVGLVSHGAHLDAATPQAEIEAKLRQLNQDPAVDGILVQLPVPAGLDDRALLLELDPAKDADGLHPLNLGRLLRGEPGPRSCTPAGVMALLRSNGIDPAGKRAVVIGRSILVGQPMALMLQAANATVTVVHSRTADLAAHTREAEILVVAAGKPGMIGADHVRPGAAVVDVGIHRKPEGGLCGDVRSAEVEPIASALSPVPGGVGPMTVTMLLLNTVRAWSQRFDLPDPTPGY</sequence>
<accession>A5GRZ3</accession>
<reference key="1">
    <citation type="submission" date="2006-05" db="EMBL/GenBank/DDBJ databases">
        <authorList>
            <consortium name="Genoscope"/>
        </authorList>
    </citation>
    <scope>NUCLEOTIDE SEQUENCE [LARGE SCALE GENOMIC DNA]</scope>
    <source>
        <strain>RCC307</strain>
    </source>
</reference>
<feature type="chain" id="PRO_0000305889" description="Bifunctional protein FolD">
    <location>
        <begin position="1"/>
        <end position="292"/>
    </location>
</feature>
<feature type="binding site" evidence="1">
    <location>
        <begin position="166"/>
        <end position="168"/>
    </location>
    <ligand>
        <name>NADP(+)</name>
        <dbReference type="ChEBI" id="CHEBI:58349"/>
    </ligand>
</feature>
<feature type="binding site" evidence="1">
    <location>
        <position position="191"/>
    </location>
    <ligand>
        <name>NADP(+)</name>
        <dbReference type="ChEBI" id="CHEBI:58349"/>
    </ligand>
</feature>
<feature type="binding site" evidence="1">
    <location>
        <position position="232"/>
    </location>
    <ligand>
        <name>NADP(+)</name>
        <dbReference type="ChEBI" id="CHEBI:58349"/>
    </ligand>
</feature>
<gene>
    <name evidence="1" type="primary">folD</name>
    <name type="ordered locus">SynRCC307_0749</name>
</gene>
<keyword id="KW-0028">Amino-acid biosynthesis</keyword>
<keyword id="KW-0368">Histidine biosynthesis</keyword>
<keyword id="KW-0378">Hydrolase</keyword>
<keyword id="KW-0486">Methionine biosynthesis</keyword>
<keyword id="KW-0511">Multifunctional enzyme</keyword>
<keyword id="KW-0521">NADP</keyword>
<keyword id="KW-0554">One-carbon metabolism</keyword>
<keyword id="KW-0560">Oxidoreductase</keyword>
<keyword id="KW-0658">Purine biosynthesis</keyword>
<keyword id="KW-1185">Reference proteome</keyword>
<comment type="function">
    <text evidence="1">Catalyzes the oxidation of 5,10-methylenetetrahydrofolate to 5,10-methenyltetrahydrofolate and then the hydrolysis of 5,10-methenyltetrahydrofolate to 10-formyltetrahydrofolate.</text>
</comment>
<comment type="catalytic activity">
    <reaction evidence="1">
        <text>(6R)-5,10-methylene-5,6,7,8-tetrahydrofolate + NADP(+) = (6R)-5,10-methenyltetrahydrofolate + NADPH</text>
        <dbReference type="Rhea" id="RHEA:22812"/>
        <dbReference type="ChEBI" id="CHEBI:15636"/>
        <dbReference type="ChEBI" id="CHEBI:57455"/>
        <dbReference type="ChEBI" id="CHEBI:57783"/>
        <dbReference type="ChEBI" id="CHEBI:58349"/>
        <dbReference type="EC" id="1.5.1.5"/>
    </reaction>
</comment>
<comment type="catalytic activity">
    <reaction evidence="1">
        <text>(6R)-5,10-methenyltetrahydrofolate + H2O = (6R)-10-formyltetrahydrofolate + H(+)</text>
        <dbReference type="Rhea" id="RHEA:23700"/>
        <dbReference type="ChEBI" id="CHEBI:15377"/>
        <dbReference type="ChEBI" id="CHEBI:15378"/>
        <dbReference type="ChEBI" id="CHEBI:57455"/>
        <dbReference type="ChEBI" id="CHEBI:195366"/>
        <dbReference type="EC" id="3.5.4.9"/>
    </reaction>
</comment>
<comment type="pathway">
    <text evidence="1">One-carbon metabolism; tetrahydrofolate interconversion.</text>
</comment>
<comment type="subunit">
    <text evidence="1">Homodimer.</text>
</comment>
<comment type="similarity">
    <text evidence="1">Belongs to the tetrahydrofolate dehydrogenase/cyclohydrolase family.</text>
</comment>
<evidence type="ECO:0000255" key="1">
    <source>
        <dbReference type="HAMAP-Rule" id="MF_01576"/>
    </source>
</evidence>